<dbReference type="EC" id="3.1.3.-" evidence="1"/>
<dbReference type="EMBL" id="AE008691">
    <property type="protein sequence ID" value="AAM25142.1"/>
    <property type="molecule type" value="Genomic_DNA"/>
</dbReference>
<dbReference type="SMR" id="Q8R8N2"/>
<dbReference type="STRING" id="273068.TTE1963"/>
<dbReference type="KEGG" id="tte:TTE1963"/>
<dbReference type="eggNOG" id="COG1387">
    <property type="taxonomic scope" value="Bacteria"/>
</dbReference>
<dbReference type="HOGENOM" id="CLU_061999_0_1_9"/>
<dbReference type="Proteomes" id="UP000000555">
    <property type="component" value="Chromosome"/>
</dbReference>
<dbReference type="GO" id="GO:0005829">
    <property type="term" value="C:cytosol"/>
    <property type="evidence" value="ECO:0007669"/>
    <property type="project" value="TreeGrafter"/>
</dbReference>
<dbReference type="GO" id="GO:0016791">
    <property type="term" value="F:phosphatase activity"/>
    <property type="evidence" value="ECO:0007669"/>
    <property type="project" value="UniProtKB-UniRule"/>
</dbReference>
<dbReference type="GO" id="GO:0008270">
    <property type="term" value="F:zinc ion binding"/>
    <property type="evidence" value="ECO:0007669"/>
    <property type="project" value="UniProtKB-UniRule"/>
</dbReference>
<dbReference type="CDD" id="cd07437">
    <property type="entry name" value="PHP_HisPPase_Ycdx_like"/>
    <property type="match status" value="1"/>
</dbReference>
<dbReference type="Gene3D" id="3.20.20.140">
    <property type="entry name" value="Metal-dependent hydrolases"/>
    <property type="match status" value="1"/>
</dbReference>
<dbReference type="HAMAP" id="MF_01561">
    <property type="entry name" value="YcdX_phosphat"/>
    <property type="match status" value="1"/>
</dbReference>
<dbReference type="InterPro" id="IPR023710">
    <property type="entry name" value="Phosphatase_YcdX_put"/>
</dbReference>
<dbReference type="InterPro" id="IPR004013">
    <property type="entry name" value="PHP_dom"/>
</dbReference>
<dbReference type="InterPro" id="IPR050243">
    <property type="entry name" value="PHP_phosphatase"/>
</dbReference>
<dbReference type="InterPro" id="IPR003141">
    <property type="entry name" value="Pol/His_phosphatase_N"/>
</dbReference>
<dbReference type="InterPro" id="IPR016195">
    <property type="entry name" value="Pol/histidinol_Pase-like"/>
</dbReference>
<dbReference type="NCBIfam" id="NF006702">
    <property type="entry name" value="PRK09248.1"/>
    <property type="match status" value="1"/>
</dbReference>
<dbReference type="PANTHER" id="PTHR36928">
    <property type="entry name" value="PHOSPHATASE YCDX-RELATED"/>
    <property type="match status" value="1"/>
</dbReference>
<dbReference type="PANTHER" id="PTHR36928:SF1">
    <property type="entry name" value="PHOSPHATASE YCDX-RELATED"/>
    <property type="match status" value="1"/>
</dbReference>
<dbReference type="Pfam" id="PF02811">
    <property type="entry name" value="PHP"/>
    <property type="match status" value="1"/>
</dbReference>
<dbReference type="SMART" id="SM00481">
    <property type="entry name" value="POLIIIAc"/>
    <property type="match status" value="1"/>
</dbReference>
<dbReference type="SUPFAM" id="SSF89550">
    <property type="entry name" value="PHP domain-like"/>
    <property type="match status" value="1"/>
</dbReference>
<keyword id="KW-0378">Hydrolase</keyword>
<keyword id="KW-0479">Metal-binding</keyword>
<keyword id="KW-1185">Reference proteome</keyword>
<keyword id="KW-0862">Zinc</keyword>
<reference key="1">
    <citation type="journal article" date="2002" name="Genome Res.">
        <title>A complete sequence of the T. tengcongensis genome.</title>
        <authorList>
            <person name="Bao Q."/>
            <person name="Tian Y."/>
            <person name="Li W."/>
            <person name="Xu Z."/>
            <person name="Xuan Z."/>
            <person name="Hu S."/>
            <person name="Dong W."/>
            <person name="Yang J."/>
            <person name="Chen Y."/>
            <person name="Xue Y."/>
            <person name="Xu Y."/>
            <person name="Lai X."/>
            <person name="Huang L."/>
            <person name="Dong X."/>
            <person name="Ma Y."/>
            <person name="Ling L."/>
            <person name="Tan H."/>
            <person name="Chen R."/>
            <person name="Wang J."/>
            <person name="Yu J."/>
            <person name="Yang H."/>
        </authorList>
    </citation>
    <scope>NUCLEOTIDE SEQUENCE [LARGE SCALE GENOMIC DNA]</scope>
    <source>
        <strain>DSM 15242 / JCM 11007 / NBRC 100824 / MB4</strain>
    </source>
</reference>
<feature type="chain" id="PRO_0000228705" description="Probable phosphatase TTE1963">
    <location>
        <begin position="1"/>
        <end position="254"/>
    </location>
</feature>
<feature type="binding site" evidence="1">
    <location>
        <position position="14"/>
    </location>
    <ligand>
        <name>Zn(2+)</name>
        <dbReference type="ChEBI" id="CHEBI:29105"/>
        <label>1</label>
    </ligand>
</feature>
<feature type="binding site" evidence="1">
    <location>
        <position position="16"/>
    </location>
    <ligand>
        <name>Zn(2+)</name>
        <dbReference type="ChEBI" id="CHEBI:29105"/>
        <label>1</label>
    </ligand>
</feature>
<feature type="binding site" evidence="1">
    <location>
        <position position="22"/>
    </location>
    <ligand>
        <name>Zn(2+)</name>
        <dbReference type="ChEBI" id="CHEBI:29105"/>
        <label>2</label>
    </ligand>
</feature>
<feature type="binding site" evidence="1">
    <location>
        <position position="47"/>
    </location>
    <ligand>
        <name>Zn(2+)</name>
        <dbReference type="ChEBI" id="CHEBI:29105"/>
        <label>2</label>
    </ligand>
</feature>
<feature type="binding site" evidence="1">
    <location>
        <position position="80"/>
    </location>
    <ligand>
        <name>Zn(2+)</name>
        <dbReference type="ChEBI" id="CHEBI:29105"/>
        <label>1</label>
    </ligand>
</feature>
<feature type="binding site" evidence="1">
    <location>
        <position position="80"/>
    </location>
    <ligand>
        <name>Zn(2+)</name>
        <dbReference type="ChEBI" id="CHEBI:29105"/>
        <label>3</label>
    </ligand>
</feature>
<feature type="binding site" evidence="1">
    <location>
        <position position="108"/>
    </location>
    <ligand>
        <name>Zn(2+)</name>
        <dbReference type="ChEBI" id="CHEBI:29105"/>
        <label>3</label>
    </ligand>
</feature>
<feature type="binding site" evidence="1">
    <location>
        <position position="139"/>
    </location>
    <ligand>
        <name>Zn(2+)</name>
        <dbReference type="ChEBI" id="CHEBI:29105"/>
        <label>3</label>
    </ligand>
</feature>
<feature type="binding site" evidence="1">
    <location>
        <position position="200"/>
    </location>
    <ligand>
        <name>Zn(2+)</name>
        <dbReference type="ChEBI" id="CHEBI:29105"/>
        <label>1</label>
    </ligand>
</feature>
<feature type="binding site" evidence="1">
    <location>
        <position position="202"/>
    </location>
    <ligand>
        <name>Zn(2+)</name>
        <dbReference type="ChEBI" id="CHEBI:29105"/>
        <label>2</label>
    </ligand>
</feature>
<organism>
    <name type="scientific">Caldanaerobacter subterraneus subsp. tengcongensis (strain DSM 15242 / JCM 11007 / NBRC 100824 / MB4)</name>
    <name type="common">Thermoanaerobacter tengcongensis</name>
    <dbReference type="NCBI Taxonomy" id="273068"/>
    <lineage>
        <taxon>Bacteria</taxon>
        <taxon>Bacillati</taxon>
        <taxon>Bacillota</taxon>
        <taxon>Clostridia</taxon>
        <taxon>Thermoanaerobacterales</taxon>
        <taxon>Thermoanaerobacteraceae</taxon>
        <taxon>Caldanaerobacter</taxon>
    </lineage>
</organism>
<proteinExistence type="inferred from homology"/>
<protein>
    <recommendedName>
        <fullName evidence="1">Probable phosphatase TTE1963</fullName>
        <ecNumber evidence="1">3.1.3.-</ecNumber>
    </recommendedName>
</protein>
<name>Y1963_CALS4</name>
<evidence type="ECO:0000255" key="1">
    <source>
        <dbReference type="HAMAP-Rule" id="MF_01561"/>
    </source>
</evidence>
<comment type="cofactor">
    <cofactor evidence="1">
        <name>Zn(2+)</name>
        <dbReference type="ChEBI" id="CHEBI:29105"/>
    </cofactor>
    <text evidence="1">Binds 3 Zn(2+) ions per subunit.</text>
</comment>
<comment type="similarity">
    <text evidence="1">Belongs to the PHP family.</text>
</comment>
<sequence length="254" mass="28485">MKGRMKLRLVLDTHTHTIASGHAFSTIIENAREAFRKGLQLICITDHGPEMPGGPHIYYFGNLKVIPEKIEGVEILKGVEANIMDEEGRIDLPERILKKLDIVIASLHDECFEPSEDVERNTKALINAIKNPYVDIIGHPGNPIYPIDIERVLEAAKEYGKFIEINNSSFVTSRRGSEKICPIIAGKAKEMGVRVAVGSDAHICFDVGRFDEAIRLLEDINMPEELVLNTSVDKVKQYLQEKRKRIGGGQNSWN</sequence>
<gene>
    <name type="ordered locus">TTE1963</name>
</gene>
<accession>Q8R8N2</accession>